<organism>
    <name type="scientific">Escherichia coli (strain K12)</name>
    <dbReference type="NCBI Taxonomy" id="83333"/>
    <lineage>
        <taxon>Bacteria</taxon>
        <taxon>Pseudomonadati</taxon>
        <taxon>Pseudomonadota</taxon>
        <taxon>Gammaproteobacteria</taxon>
        <taxon>Enterobacterales</taxon>
        <taxon>Enterobacteriaceae</taxon>
        <taxon>Escherichia</taxon>
    </lineage>
</organism>
<proteinExistence type="inferred from homology"/>
<protein>
    <recommendedName>
        <fullName>Protein YqgD</fullName>
    </recommendedName>
</protein>
<gene>
    <name type="primary">yqgD</name>
    <name type="ordered locus">b2941</name>
    <name type="ordered locus">JW2908</name>
</gene>
<name>YQGD_ECOLI</name>
<dbReference type="EMBL" id="U28377">
    <property type="protein sequence ID" value="AAA69108.1"/>
    <property type="molecule type" value="Genomic_DNA"/>
</dbReference>
<dbReference type="EMBL" id="U00096">
    <property type="protein sequence ID" value="AYC08242.1"/>
    <property type="molecule type" value="Genomic_DNA"/>
</dbReference>
<dbReference type="EMBL" id="AP009048">
    <property type="protein sequence ID" value="BAE77004.1"/>
    <property type="molecule type" value="Genomic_DNA"/>
</dbReference>
<dbReference type="PIR" id="D65079">
    <property type="entry name" value="D65079"/>
</dbReference>
<dbReference type="RefSeq" id="WP_001326496.1">
    <property type="nucleotide sequence ID" value="NZ_SSZK01000003.1"/>
</dbReference>
<dbReference type="FunCoup" id="P46879">
    <property type="interactions" value="5"/>
</dbReference>
<dbReference type="EnsemblBacteria" id="AYC08242">
    <property type="protein sequence ID" value="AYC08242"/>
    <property type="gene ID" value="b2941"/>
</dbReference>
<dbReference type="KEGG" id="ecj:JW2908"/>
<dbReference type="KEGG" id="ecoc:C3026_16100"/>
<dbReference type="PATRIC" id="fig|1411691.4.peg.3792"/>
<dbReference type="EchoBASE" id="EB2958"/>
<dbReference type="eggNOG" id="ENOG502ZP5F">
    <property type="taxonomic scope" value="Bacteria"/>
</dbReference>
<dbReference type="HOGENOM" id="CLU_189034_0_0_6"/>
<dbReference type="InParanoid" id="P46879"/>
<dbReference type="OMA" id="IMRIYTL"/>
<dbReference type="PhylomeDB" id="P46879"/>
<dbReference type="BioCyc" id="EcoCyc:G7523-MONOMER"/>
<dbReference type="PRO" id="PR:P46879"/>
<dbReference type="Proteomes" id="UP000000625">
    <property type="component" value="Chromosome"/>
</dbReference>
<dbReference type="AntiFam" id="ANF00069">
    <property type="entry name" value="Translation of predicted DNA regulatory sequence"/>
</dbReference>
<feature type="chain" id="PRO_0000169387" description="Protein YqgD">
    <location>
        <begin position="1"/>
        <end position="83"/>
    </location>
</feature>
<comment type="similarity">
    <text evidence="1">Belongs to the YqgD family.</text>
</comment>
<reference key="1">
    <citation type="journal article" date="1997" name="Science">
        <title>The complete genome sequence of Escherichia coli K-12.</title>
        <authorList>
            <person name="Blattner F.R."/>
            <person name="Plunkett G. III"/>
            <person name="Bloch C.A."/>
            <person name="Perna N.T."/>
            <person name="Burland V."/>
            <person name="Riley M."/>
            <person name="Collado-Vides J."/>
            <person name="Glasner J.D."/>
            <person name="Rode C.K."/>
            <person name="Mayhew G.F."/>
            <person name="Gregor J."/>
            <person name="Davis N.W."/>
            <person name="Kirkpatrick H.A."/>
            <person name="Goeden M.A."/>
            <person name="Rose D.J."/>
            <person name="Mau B."/>
            <person name="Shao Y."/>
        </authorList>
    </citation>
    <scope>NUCLEOTIDE SEQUENCE [LARGE SCALE GENOMIC DNA]</scope>
    <source>
        <strain>K12 / MG1655 / ATCC 47076</strain>
    </source>
</reference>
<reference key="2">
    <citation type="journal article" date="2006" name="Mol. Syst. Biol.">
        <title>Highly accurate genome sequences of Escherichia coli K-12 strains MG1655 and W3110.</title>
        <authorList>
            <person name="Hayashi K."/>
            <person name="Morooka N."/>
            <person name="Yamamoto Y."/>
            <person name="Fujita K."/>
            <person name="Isono K."/>
            <person name="Choi S."/>
            <person name="Ohtsubo E."/>
            <person name="Baba T."/>
            <person name="Wanner B.L."/>
            <person name="Mori H."/>
            <person name="Horiuchi T."/>
        </authorList>
    </citation>
    <scope>NUCLEOTIDE SEQUENCE [LARGE SCALE GENOMIC DNA]</scope>
    <source>
        <strain>K12 / W3110 / ATCC 27325 / DSM 5911</strain>
    </source>
</reference>
<accession>P46879</accession>
<accession>A0A385XND9</accession>
<accession>Q2M9Q2</accession>
<sequence length="83" mass="9519">MVADPTTTLQVKNTGSLSVNRYGWINIWMAILGQFFTLFPLFFESCLILLKTWLEIFPDNAGILRIYLLQFSAIVGYKTRRAA</sequence>
<keyword id="KW-1185">Reference proteome</keyword>
<evidence type="ECO:0000305" key="1"/>